<organism>
    <name type="scientific">Arabidopsis thaliana</name>
    <name type="common">Mouse-ear cress</name>
    <dbReference type="NCBI Taxonomy" id="3702"/>
    <lineage>
        <taxon>Eukaryota</taxon>
        <taxon>Viridiplantae</taxon>
        <taxon>Streptophyta</taxon>
        <taxon>Embryophyta</taxon>
        <taxon>Tracheophyta</taxon>
        <taxon>Spermatophyta</taxon>
        <taxon>Magnoliopsida</taxon>
        <taxon>eudicotyledons</taxon>
        <taxon>Gunneridae</taxon>
        <taxon>Pentapetalae</taxon>
        <taxon>rosids</taxon>
        <taxon>malvids</taxon>
        <taxon>Brassicales</taxon>
        <taxon>Brassicaceae</taxon>
        <taxon>Camelineae</taxon>
        <taxon>Arabidopsis</taxon>
    </lineage>
</organism>
<keyword id="KW-0025">Alternative splicing</keyword>
<keyword id="KW-0067">ATP-binding</keyword>
<keyword id="KW-0203">Cytokinin biosynthesis</keyword>
<keyword id="KW-0963">Cytoplasm</keyword>
<keyword id="KW-0460">Magnesium</keyword>
<keyword id="KW-0547">Nucleotide-binding</keyword>
<keyword id="KW-1185">Reference proteome</keyword>
<keyword id="KW-0808">Transferase</keyword>
<keyword id="KW-0819">tRNA processing</keyword>
<sequence length="466" mass="53098">MMMLNPSNGGIEGEKMKKKAKVVVIMGPTGSGKSKLAVDLASHFPVEIINADAMQIYSGLDVLTNKVTVDEQKGVPHHLLGTVSSDMEFTARDFRDFTVPLIEEIVSRNHIPVLVGGTHYYIQAVVSKFLLDDAAEDTEECCADVASVVDQDMVVESVFGRDDLSHGYELLKELDPVAANRIHPNNHRKINQYLSLHASRGVLPSKLYQGKTAENWGCINASRFDYCLICMDAETAVLDRYVEQRVDAMVDAGLLDEVYDIYKPGADYTRGLRQSIGVREFEDFLKIHLSETCAGHLTSLSNDDKVMKENLRKILNFPKDDKLRIMLEEAIDRVKLNTRRLLRRQKRRVSRLETVFGWNIHYIDATEYILSKSEESWNAQVVKPASEIIRCFLETETESGRDPTSGKSIERDLWTQYVCEACGNKILRGRHEWEHHKQGRTHRKRTTRHKNSQTYKNREVQEAEVN</sequence>
<evidence type="ECO:0000250" key="1"/>
<evidence type="ECO:0000255" key="2"/>
<evidence type="ECO:0000256" key="3">
    <source>
        <dbReference type="SAM" id="MobiDB-lite"/>
    </source>
</evidence>
<evidence type="ECO:0000269" key="4">
    <source>
    </source>
</evidence>
<evidence type="ECO:0000269" key="5">
    <source>
    </source>
</evidence>
<evidence type="ECO:0000269" key="6">
    <source>
    </source>
</evidence>
<evidence type="ECO:0000269" key="7">
    <source>
    </source>
</evidence>
<evidence type="ECO:0000269" key="8">
    <source>
    </source>
</evidence>
<evidence type="ECO:0000269" key="9">
    <source>
    </source>
</evidence>
<evidence type="ECO:0000303" key="10">
    <source>
    </source>
</evidence>
<evidence type="ECO:0000303" key="11">
    <source ref="6"/>
</evidence>
<evidence type="ECO:0000305" key="12"/>
<accession>Q9ZUX7</accession>
<accession>Q8RXJ9</accession>
<accession>Q9SQ59</accession>
<feature type="chain" id="PRO_0000391071" description="tRNA dimethylallyltransferase 2">
    <location>
        <begin position="1"/>
        <end position="466"/>
    </location>
</feature>
<feature type="region of interest" description="Interaction with substrate tRNA" evidence="1">
    <location>
        <begin position="52"/>
        <end position="55"/>
    </location>
</feature>
<feature type="region of interest" description="Disordered" evidence="3">
    <location>
        <begin position="433"/>
        <end position="466"/>
    </location>
</feature>
<feature type="compositionally biased region" description="Basic residues" evidence="3">
    <location>
        <begin position="437"/>
        <end position="451"/>
    </location>
</feature>
<feature type="compositionally biased region" description="Basic and acidic residues" evidence="3">
    <location>
        <begin position="456"/>
        <end position="466"/>
    </location>
</feature>
<feature type="binding site" evidence="2">
    <location>
        <begin position="27"/>
        <end position="34"/>
    </location>
    <ligand>
        <name>ATP</name>
        <dbReference type="ChEBI" id="CHEBI:30616"/>
    </ligand>
</feature>
<feature type="binding site" evidence="1">
    <location>
        <begin position="29"/>
        <end position="34"/>
    </location>
    <ligand>
        <name>substrate</name>
    </ligand>
</feature>
<feature type="site" description="Interaction with substrate tRNA" evidence="1">
    <location>
        <position position="118"/>
    </location>
</feature>
<feature type="splice variant" id="VSP_038683" description="In isoform 2." evidence="10 11">
    <location>
        <begin position="1"/>
        <end position="136"/>
    </location>
</feature>
<feature type="splice variant" id="VSP_038684" description="In isoform 2." evidence="10 11">
    <original>DTEECCADVASVVD</original>
    <variation>MQQRIPRSVVQMLL</variation>
    <location>
        <begin position="137"/>
        <end position="150"/>
    </location>
</feature>
<gene>
    <name type="primary">IPT2</name>
    <name type="ordered locus">At2g27760</name>
    <name type="ORF">F15K20</name>
</gene>
<dbReference type="EC" id="2.5.1.75"/>
<dbReference type="EMBL" id="AB062609">
    <property type="protein sequence ID" value="BAB59042.1"/>
    <property type="molecule type" value="mRNA"/>
</dbReference>
<dbReference type="EMBL" id="AF109376">
    <property type="protein sequence ID" value="AAF00582.1"/>
    <property type="molecule type" value="mRNA"/>
</dbReference>
<dbReference type="EMBL" id="AC005824">
    <property type="protein sequence ID" value="AAC73024.2"/>
    <property type="molecule type" value="Genomic_DNA"/>
</dbReference>
<dbReference type="EMBL" id="CP002685">
    <property type="protein sequence ID" value="AEC08039.1"/>
    <property type="molecule type" value="Genomic_DNA"/>
</dbReference>
<dbReference type="EMBL" id="AY080847">
    <property type="protein sequence ID" value="AAL87321.1"/>
    <property type="molecule type" value="mRNA"/>
</dbReference>
<dbReference type="EMBL" id="BT001906">
    <property type="protein sequence ID" value="AAN71905.1"/>
    <property type="molecule type" value="mRNA"/>
</dbReference>
<dbReference type="EMBL" id="AK221649">
    <property type="protein sequence ID" value="BAD95312.1"/>
    <property type="molecule type" value="mRNA"/>
</dbReference>
<dbReference type="PIR" id="F84676">
    <property type="entry name" value="F84676"/>
</dbReference>
<dbReference type="PIR" id="T52061">
    <property type="entry name" value="T52061"/>
</dbReference>
<dbReference type="RefSeq" id="NP_565658.1">
    <molecule id="Q9ZUX7-1"/>
    <property type="nucleotide sequence ID" value="NM_128335.2"/>
</dbReference>
<dbReference type="SMR" id="Q9ZUX7"/>
<dbReference type="FunCoup" id="Q9ZUX7">
    <property type="interactions" value="4475"/>
</dbReference>
<dbReference type="IntAct" id="Q9ZUX7">
    <property type="interactions" value="1"/>
</dbReference>
<dbReference type="STRING" id="3702.Q9ZUX7"/>
<dbReference type="PaxDb" id="3702-AT2G27760.1"/>
<dbReference type="ProteomicsDB" id="248485">
    <molecule id="Q9ZUX7-1"/>
</dbReference>
<dbReference type="EnsemblPlants" id="AT2G27760.1">
    <molecule id="Q9ZUX7-1"/>
    <property type="protein sequence ID" value="AT2G27760.1"/>
    <property type="gene ID" value="AT2G27760"/>
</dbReference>
<dbReference type="GeneID" id="817322"/>
<dbReference type="Gramene" id="AT2G27760.1">
    <molecule id="Q9ZUX7-1"/>
    <property type="protein sequence ID" value="AT2G27760.1"/>
    <property type="gene ID" value="AT2G27760"/>
</dbReference>
<dbReference type="KEGG" id="ath:AT2G27760"/>
<dbReference type="Araport" id="AT2G27760"/>
<dbReference type="TAIR" id="AT2G27760">
    <property type="gene designation" value="IPT2"/>
</dbReference>
<dbReference type="eggNOG" id="KOG1384">
    <property type="taxonomic scope" value="Eukaryota"/>
</dbReference>
<dbReference type="HOGENOM" id="CLU_032616_2_0_1"/>
<dbReference type="InParanoid" id="Q9ZUX7"/>
<dbReference type="OMA" id="TAENWGC"/>
<dbReference type="PhylomeDB" id="Q9ZUX7"/>
<dbReference type="BioCyc" id="ARA:AT2G27760-MONOMER"/>
<dbReference type="BioCyc" id="MetaCyc:AT2G27760-MONOMER"/>
<dbReference type="BRENDA" id="2.5.1.75">
    <property type="organism ID" value="399"/>
</dbReference>
<dbReference type="PRO" id="PR:Q9ZUX7"/>
<dbReference type="Proteomes" id="UP000006548">
    <property type="component" value="Chromosome 2"/>
</dbReference>
<dbReference type="ExpressionAtlas" id="Q9ZUX7">
    <property type="expression patterns" value="baseline and differential"/>
</dbReference>
<dbReference type="GO" id="GO:0005829">
    <property type="term" value="C:cytosol"/>
    <property type="evidence" value="ECO:0000314"/>
    <property type="project" value="TAIR"/>
</dbReference>
<dbReference type="GO" id="GO:0009824">
    <property type="term" value="F:AMP dimethylallyltransferase activity"/>
    <property type="evidence" value="ECO:0000314"/>
    <property type="project" value="TAIR"/>
</dbReference>
<dbReference type="GO" id="GO:0005524">
    <property type="term" value="F:ATP binding"/>
    <property type="evidence" value="ECO:0007669"/>
    <property type="project" value="UniProtKB-KW"/>
</dbReference>
<dbReference type="GO" id="GO:0052381">
    <property type="term" value="F:tRNA dimethylallyltransferase activity"/>
    <property type="evidence" value="ECO:0007669"/>
    <property type="project" value="UniProtKB-EC"/>
</dbReference>
<dbReference type="GO" id="GO:0009691">
    <property type="term" value="P:cytokinin biosynthetic process"/>
    <property type="evidence" value="ECO:0000314"/>
    <property type="project" value="TAIR"/>
</dbReference>
<dbReference type="GO" id="GO:0008033">
    <property type="term" value="P:tRNA processing"/>
    <property type="evidence" value="ECO:0007669"/>
    <property type="project" value="UniProtKB-KW"/>
</dbReference>
<dbReference type="FunFam" id="1.10.20.140:FF:000006">
    <property type="entry name" value="tRNA dimethylallyltransferase"/>
    <property type="match status" value="1"/>
</dbReference>
<dbReference type="FunFam" id="3.30.160.60:FF:002405">
    <property type="entry name" value="tRNA dimethylallyltransferase"/>
    <property type="match status" value="1"/>
</dbReference>
<dbReference type="Gene3D" id="1.10.20.140">
    <property type="match status" value="1"/>
</dbReference>
<dbReference type="Gene3D" id="3.30.160.60">
    <property type="entry name" value="Classic Zinc Finger"/>
    <property type="match status" value="1"/>
</dbReference>
<dbReference type="Gene3D" id="3.40.50.300">
    <property type="entry name" value="P-loop containing nucleotide triphosphate hydrolases"/>
    <property type="match status" value="1"/>
</dbReference>
<dbReference type="HAMAP" id="MF_00185">
    <property type="entry name" value="IPP_trans"/>
    <property type="match status" value="1"/>
</dbReference>
<dbReference type="InterPro" id="IPR039657">
    <property type="entry name" value="Dimethylallyltransferase"/>
</dbReference>
<dbReference type="InterPro" id="IPR030666">
    <property type="entry name" value="IPP_transferase_euk"/>
</dbReference>
<dbReference type="InterPro" id="IPR018022">
    <property type="entry name" value="IPT"/>
</dbReference>
<dbReference type="InterPro" id="IPR027417">
    <property type="entry name" value="P-loop_NTPase"/>
</dbReference>
<dbReference type="NCBIfam" id="TIGR00174">
    <property type="entry name" value="miaA"/>
    <property type="match status" value="1"/>
</dbReference>
<dbReference type="PANTHER" id="PTHR11088">
    <property type="entry name" value="TRNA DIMETHYLALLYLTRANSFERASE"/>
    <property type="match status" value="1"/>
</dbReference>
<dbReference type="PANTHER" id="PTHR11088:SF82">
    <property type="entry name" value="TRNA DIMETHYLALLYLTRANSFERASE 2"/>
    <property type="match status" value="1"/>
</dbReference>
<dbReference type="Pfam" id="PF01715">
    <property type="entry name" value="IPPT"/>
    <property type="match status" value="1"/>
</dbReference>
<dbReference type="PIRSF" id="PIRSF039110">
    <property type="entry name" value="IPP_transferase"/>
    <property type="match status" value="1"/>
</dbReference>
<dbReference type="SUPFAM" id="SSF52540">
    <property type="entry name" value="P-loop containing nucleoside triphosphate hydrolases"/>
    <property type="match status" value="1"/>
</dbReference>
<reference key="1">
    <citation type="journal article" date="2001" name="J. Biol. Chem.">
        <title>Identification of genes encoding adenylate isopentenyltransferase, a cytokinin biosynthesis enzyme, in Arabidopsis thaliana.</title>
        <authorList>
            <person name="Takei K."/>
            <person name="Sakakibara H."/>
            <person name="Sugiyama T."/>
        </authorList>
    </citation>
    <scope>NUCLEOTIDE SEQUENCE [MRNA] (ISOFORM 1)</scope>
    <scope>CATALYTIC ACTIVITY</scope>
    <scope>GENE FAMILY</scope>
    <source>
        <strain>cv. Columbia</strain>
    </source>
</reference>
<reference key="2">
    <citation type="journal article" date="2002" name="Plant Mol. Biol.">
        <title>Identification of a tRNA isopentenyltransferase gene from Arabidopsis thaliana.</title>
        <authorList>
            <person name="Golovko A."/>
            <person name="Sitbon F."/>
            <person name="Tillberg E."/>
            <person name="Nicander B."/>
        </authorList>
    </citation>
    <scope>NUCLEOTIDE SEQUENCE [MRNA] (ISOFORM 1)</scope>
    <scope>FUNCTION</scope>
</reference>
<reference key="3">
    <citation type="journal article" date="1999" name="Nature">
        <title>Sequence and analysis of chromosome 2 of the plant Arabidopsis thaliana.</title>
        <authorList>
            <person name="Lin X."/>
            <person name="Kaul S."/>
            <person name="Rounsley S.D."/>
            <person name="Shea T.P."/>
            <person name="Benito M.-I."/>
            <person name="Town C.D."/>
            <person name="Fujii C.Y."/>
            <person name="Mason T.M."/>
            <person name="Bowman C.L."/>
            <person name="Barnstead M.E."/>
            <person name="Feldblyum T.V."/>
            <person name="Buell C.R."/>
            <person name="Ketchum K.A."/>
            <person name="Lee J.J."/>
            <person name="Ronning C.M."/>
            <person name="Koo H.L."/>
            <person name="Moffat K.S."/>
            <person name="Cronin L.A."/>
            <person name="Shen M."/>
            <person name="Pai G."/>
            <person name="Van Aken S."/>
            <person name="Umayam L."/>
            <person name="Tallon L.J."/>
            <person name="Gill J.E."/>
            <person name="Adams M.D."/>
            <person name="Carrera A.J."/>
            <person name="Creasy T.H."/>
            <person name="Goodman H.M."/>
            <person name="Somerville C.R."/>
            <person name="Copenhaver G.P."/>
            <person name="Preuss D."/>
            <person name="Nierman W.C."/>
            <person name="White O."/>
            <person name="Eisen J.A."/>
            <person name="Salzberg S.L."/>
            <person name="Fraser C.M."/>
            <person name="Venter J.C."/>
        </authorList>
    </citation>
    <scope>NUCLEOTIDE SEQUENCE [LARGE SCALE GENOMIC DNA]</scope>
    <source>
        <strain>cv. Columbia</strain>
    </source>
</reference>
<reference key="4">
    <citation type="journal article" date="2017" name="Plant J.">
        <title>Araport11: a complete reannotation of the Arabidopsis thaliana reference genome.</title>
        <authorList>
            <person name="Cheng C.Y."/>
            <person name="Krishnakumar V."/>
            <person name="Chan A.P."/>
            <person name="Thibaud-Nissen F."/>
            <person name="Schobel S."/>
            <person name="Town C.D."/>
        </authorList>
    </citation>
    <scope>GENOME REANNOTATION</scope>
    <source>
        <strain>cv. Columbia</strain>
    </source>
</reference>
<reference key="5">
    <citation type="journal article" date="2003" name="Science">
        <title>Empirical analysis of transcriptional activity in the Arabidopsis genome.</title>
        <authorList>
            <person name="Yamada K."/>
            <person name="Lim J."/>
            <person name="Dale J.M."/>
            <person name="Chen H."/>
            <person name="Shinn P."/>
            <person name="Palm C.J."/>
            <person name="Southwick A.M."/>
            <person name="Wu H.C."/>
            <person name="Kim C.J."/>
            <person name="Nguyen M."/>
            <person name="Pham P.K."/>
            <person name="Cheuk R.F."/>
            <person name="Karlin-Newmann G."/>
            <person name="Liu S.X."/>
            <person name="Lam B."/>
            <person name="Sakano H."/>
            <person name="Wu T."/>
            <person name="Yu G."/>
            <person name="Miranda M."/>
            <person name="Quach H.L."/>
            <person name="Tripp M."/>
            <person name="Chang C.H."/>
            <person name="Lee J.M."/>
            <person name="Toriumi M.J."/>
            <person name="Chan M.M."/>
            <person name="Tang C.C."/>
            <person name="Onodera C.S."/>
            <person name="Deng J.M."/>
            <person name="Akiyama K."/>
            <person name="Ansari Y."/>
            <person name="Arakawa T."/>
            <person name="Banh J."/>
            <person name="Banno F."/>
            <person name="Bowser L."/>
            <person name="Brooks S.Y."/>
            <person name="Carninci P."/>
            <person name="Chao Q."/>
            <person name="Choy N."/>
            <person name="Enju A."/>
            <person name="Goldsmith A.D."/>
            <person name="Gurjal M."/>
            <person name="Hansen N.F."/>
            <person name="Hayashizaki Y."/>
            <person name="Johnson-Hopson C."/>
            <person name="Hsuan V.W."/>
            <person name="Iida K."/>
            <person name="Karnes M."/>
            <person name="Khan S."/>
            <person name="Koesema E."/>
            <person name="Ishida J."/>
            <person name="Jiang P.X."/>
            <person name="Jones T."/>
            <person name="Kawai J."/>
            <person name="Kamiya A."/>
            <person name="Meyers C."/>
            <person name="Nakajima M."/>
            <person name="Narusaka M."/>
            <person name="Seki M."/>
            <person name="Sakurai T."/>
            <person name="Satou M."/>
            <person name="Tamse R."/>
            <person name="Vaysberg M."/>
            <person name="Wallender E.K."/>
            <person name="Wong C."/>
            <person name="Yamamura Y."/>
            <person name="Yuan S."/>
            <person name="Shinozaki K."/>
            <person name="Davis R.W."/>
            <person name="Theologis A."/>
            <person name="Ecker J.R."/>
        </authorList>
    </citation>
    <scope>NUCLEOTIDE SEQUENCE [LARGE SCALE MRNA] (ISOFORMS 1 AND 2)</scope>
    <source>
        <strain>cv. Columbia</strain>
    </source>
</reference>
<reference key="6">
    <citation type="submission" date="2005-03" db="EMBL/GenBank/DDBJ databases">
        <title>Large-scale analysis of RIKEN Arabidopsis full-length (RAFL) cDNAs.</title>
        <authorList>
            <person name="Totoki Y."/>
            <person name="Seki M."/>
            <person name="Ishida J."/>
            <person name="Nakajima M."/>
            <person name="Enju A."/>
            <person name="Kamiya A."/>
            <person name="Narusaka M."/>
            <person name="Shin-i T."/>
            <person name="Nakagawa M."/>
            <person name="Sakamoto N."/>
            <person name="Oishi K."/>
            <person name="Kohara Y."/>
            <person name="Kobayashi M."/>
            <person name="Toyoda A."/>
            <person name="Sakaki Y."/>
            <person name="Sakurai T."/>
            <person name="Iida K."/>
            <person name="Akiyama K."/>
            <person name="Satou M."/>
            <person name="Toyoda T."/>
            <person name="Konagaya A."/>
            <person name="Carninci P."/>
            <person name="Kawai J."/>
            <person name="Hayashizaki Y."/>
            <person name="Shinozaki K."/>
        </authorList>
    </citation>
    <scope>NUCLEOTIDE SEQUENCE [LARGE SCALE MRNA] (ISOFORM 2)</scope>
    <source>
        <strain>cv. Columbia</strain>
    </source>
</reference>
<reference key="7">
    <citation type="journal article" date="2001" name="Plant Cell Physiol.">
        <title>Identification of plant cytokinin biosynthetic enzymes as dimethylallyl diphosphate:ATP/ADP isopentenyltransferases.</title>
        <authorList>
            <person name="Kakimoto T."/>
        </authorList>
    </citation>
    <scope>CATALYTIC ACTIVITY</scope>
    <scope>GENE FAMILY</scope>
    <source>
        <strain>cv. Wassilewskija</strain>
    </source>
</reference>
<reference key="8">
    <citation type="journal article" date="2004" name="J. Biol. Chem.">
        <title>Distinct isoprenoid origins of cis- and trans-zeatin biosyntheses in Arabidopsis.</title>
        <authorList>
            <person name="Kasahara H."/>
            <person name="Takei K."/>
            <person name="Ueda N."/>
            <person name="Hishiyama S."/>
            <person name="Yamaya T."/>
            <person name="Kamiya Y."/>
            <person name="Yamaguchi S."/>
            <person name="Sakakibara H."/>
        </authorList>
    </citation>
    <scope>SUBCELLULAR LOCATION</scope>
</reference>
<reference key="9">
    <citation type="journal article" date="2004" name="Plant J.">
        <title>Expression of cytokinin biosynthetic isopentenyltransferase genes in Arabidopsis: tissue specificity and regulation by auxin, cytokinin, and nitrate.</title>
        <authorList>
            <person name="Miyawaki K."/>
            <person name="Matsumoto-Kitano M."/>
            <person name="Kakimoto T."/>
        </authorList>
    </citation>
    <scope>TISSUE SPECIFICITY</scope>
    <scope>INDUCTION</scope>
</reference>
<reference key="10">
    <citation type="journal article" date="2006" name="Proc. Natl. Acad. Sci. U.S.A.">
        <title>Roles of Arabidopsis ATP/ADP isopentenyltransferases and tRNA isopentenyltransferases in cytokinin biosynthesis.</title>
        <authorList>
            <person name="Miyawaki K."/>
            <person name="Tarkowski P."/>
            <person name="Matsumoto-Kitano M."/>
            <person name="Kato T."/>
            <person name="Sato S."/>
            <person name="Tarkowska D."/>
            <person name="Tabata S."/>
            <person name="Sandberg G."/>
            <person name="Kakimoto T."/>
        </authorList>
    </citation>
    <scope>FUNCTION</scope>
    <scope>DISRUPTION PHENOTYPE</scope>
</reference>
<name>IPT2_ARATH</name>
<comment type="function">
    <text evidence="6 9">Catalyzes the transfer of a dimethylallyl group onto the adenine at position 37 in tRNAs that read codons beginning with uridine, leading to the formation of N6-(dimethylallyl)adenosine (i(6)A). Involved in the cis-type cytokinin biosynthesis.</text>
</comment>
<comment type="catalytic activity">
    <reaction evidence="4 5">
        <text>adenosine(37) in tRNA + dimethylallyl diphosphate = N(6)-dimethylallyladenosine(37) in tRNA + diphosphate</text>
        <dbReference type="Rhea" id="RHEA:26482"/>
        <dbReference type="Rhea" id="RHEA-COMP:10162"/>
        <dbReference type="Rhea" id="RHEA-COMP:10375"/>
        <dbReference type="ChEBI" id="CHEBI:33019"/>
        <dbReference type="ChEBI" id="CHEBI:57623"/>
        <dbReference type="ChEBI" id="CHEBI:74411"/>
        <dbReference type="ChEBI" id="CHEBI:74415"/>
        <dbReference type="EC" id="2.5.1.75"/>
    </reaction>
</comment>
<comment type="cofactor">
    <cofactor evidence="1">
        <name>Mg(2+)</name>
        <dbReference type="ChEBI" id="CHEBI:18420"/>
    </cofactor>
</comment>
<comment type="subcellular location">
    <subcellularLocation>
        <location evidence="8">Cytoplasm</location>
    </subcellularLocation>
</comment>
<comment type="alternative products">
    <event type="alternative splicing"/>
    <isoform>
        <id>Q9ZUX7-1</id>
        <name>1</name>
        <sequence type="displayed"/>
    </isoform>
    <isoform>
        <id>Q9ZUX7-2</id>
        <name>2</name>
        <sequence type="described" ref="VSP_038683 VSP_038684"/>
    </isoform>
</comment>
<comment type="tissue specificity">
    <text evidence="7">Expressed ubiquitously, with highest expression in proliferating tissues.</text>
</comment>
<comment type="induction">
    <text evidence="7">Not regulated by cytokinin, auxin or nitrate.</text>
</comment>
<comment type="disruption phenotype">
    <text evidence="9">No visible phenotype, due the redundancy with IPT9.</text>
</comment>
<comment type="miscellaneous">
    <text>Contains 2 inserted regions when compared with other members of the Arabidopsis IPT family. No adenylate isopentenyltransferase activity detected neither in cv. Columbia, nor in cv. Wassilewskija.</text>
</comment>
<comment type="similarity">
    <text evidence="12">Belongs to the IPP transferase family.</text>
</comment>
<protein>
    <recommendedName>
        <fullName>tRNA dimethylallyltransferase 2</fullName>
        <ecNumber>2.5.1.75</ecNumber>
    </recommendedName>
    <alternativeName>
        <fullName>Isopentenyl-diphosphate: tRNA isopentenyltransferase 2</fullName>
        <shortName>AtIPT2</shortName>
        <shortName>IPP transferase 2</shortName>
        <shortName>IPPT 2</shortName>
    </alternativeName>
</protein>
<proteinExistence type="evidence at protein level"/>